<protein>
    <recommendedName>
        <fullName>V-type proton ATPase 16 kDa proteolipid subunit</fullName>
        <shortName>V-ATPase 16 kDa proteolipid subunit</shortName>
    </recommendedName>
    <alternativeName>
        <fullName>Vacuolar proton pump 16 kDa proteolipid subunit</fullName>
    </alternativeName>
</protein>
<name>VATL_GOSHI</name>
<proteinExistence type="evidence at transcript level"/>
<gene>
    <name type="primary">CVA16-2</name>
</gene>
<gene>
    <name type="primary">CVA16-4</name>
</gene>
<organism>
    <name type="scientific">Gossypium hirsutum</name>
    <name type="common">Upland cotton</name>
    <name type="synonym">Gossypium mexicanum</name>
    <dbReference type="NCBI Taxonomy" id="3635"/>
    <lineage>
        <taxon>Eukaryota</taxon>
        <taxon>Viridiplantae</taxon>
        <taxon>Streptophyta</taxon>
        <taxon>Embryophyta</taxon>
        <taxon>Tracheophyta</taxon>
        <taxon>Spermatophyta</taxon>
        <taxon>Magnoliopsida</taxon>
        <taxon>eudicotyledons</taxon>
        <taxon>Gunneridae</taxon>
        <taxon>Pentapetalae</taxon>
        <taxon>rosids</taxon>
        <taxon>malvids</taxon>
        <taxon>Malvales</taxon>
        <taxon>Malvaceae</taxon>
        <taxon>Malvoideae</taxon>
        <taxon>Gossypium</taxon>
    </lineage>
</organism>
<accession>Q43434</accession>
<accession>Q43435</accession>
<evidence type="ECO:0000250" key="1"/>
<evidence type="ECO:0000255" key="2"/>
<evidence type="ECO:0000305" key="3"/>
<dbReference type="EMBL" id="U13669">
    <property type="protein sequence ID" value="AAA82976.1"/>
    <property type="molecule type" value="mRNA"/>
</dbReference>
<dbReference type="EMBL" id="U13670">
    <property type="protein sequence ID" value="AAA82977.1"/>
    <property type="molecule type" value="mRNA"/>
</dbReference>
<dbReference type="RefSeq" id="XP_016679572.1">
    <property type="nucleotide sequence ID" value="XM_016824083.1"/>
</dbReference>
<dbReference type="RefSeq" id="XP_016685356.1">
    <property type="nucleotide sequence ID" value="XM_016829867.1"/>
</dbReference>
<dbReference type="SMR" id="Q43434"/>
<dbReference type="STRING" id="3635.Q43434"/>
<dbReference type="PaxDb" id="3635-Q43434"/>
<dbReference type="GeneID" id="107903720"/>
<dbReference type="KEGG" id="ghi:107903720"/>
<dbReference type="KEGG" id="ghi:107909439"/>
<dbReference type="KEGG" id="ghi:107920550"/>
<dbReference type="KEGG" id="ghi:107936576"/>
<dbReference type="KEGG" id="ghi:107949088"/>
<dbReference type="OMA" id="MGVMKPD"/>
<dbReference type="OrthoDB" id="68561at41938"/>
<dbReference type="Proteomes" id="UP000189702">
    <property type="component" value="Chromosome 17"/>
</dbReference>
<dbReference type="Proteomes" id="UP000189702">
    <property type="component" value="Chromosome 19"/>
</dbReference>
<dbReference type="GO" id="GO:0016020">
    <property type="term" value="C:membrane"/>
    <property type="evidence" value="ECO:0000318"/>
    <property type="project" value="GO_Central"/>
</dbReference>
<dbReference type="GO" id="GO:0033179">
    <property type="term" value="C:proton-transporting V-type ATPase, V0 domain"/>
    <property type="evidence" value="ECO:0007669"/>
    <property type="project" value="InterPro"/>
</dbReference>
<dbReference type="GO" id="GO:0005774">
    <property type="term" value="C:vacuolar membrane"/>
    <property type="evidence" value="ECO:0007669"/>
    <property type="project" value="UniProtKB-SubCell"/>
</dbReference>
<dbReference type="GO" id="GO:0046961">
    <property type="term" value="F:proton-transporting ATPase activity, rotational mechanism"/>
    <property type="evidence" value="ECO:0007669"/>
    <property type="project" value="InterPro"/>
</dbReference>
<dbReference type="CDD" id="cd18175">
    <property type="entry name" value="ATP-synt_Vo_c_ATP6C_rpt1"/>
    <property type="match status" value="1"/>
</dbReference>
<dbReference type="CDD" id="cd18176">
    <property type="entry name" value="ATP-synt_Vo_c_ATP6C_rpt2"/>
    <property type="match status" value="1"/>
</dbReference>
<dbReference type="FunFam" id="1.20.120.610:FF:000003">
    <property type="entry name" value="V-type proton ATPase proteolipid subunit"/>
    <property type="match status" value="1"/>
</dbReference>
<dbReference type="Gene3D" id="1.20.120.610">
    <property type="entry name" value="lithium bound rotor ring of v- atpase"/>
    <property type="match status" value="1"/>
</dbReference>
<dbReference type="InterPro" id="IPR002379">
    <property type="entry name" value="ATPase_proteolipid_c-like_dom"/>
</dbReference>
<dbReference type="InterPro" id="IPR000245">
    <property type="entry name" value="ATPase_proteolipid_csu"/>
</dbReference>
<dbReference type="InterPro" id="IPR011555">
    <property type="entry name" value="ATPase_proteolipid_su_C_euk"/>
</dbReference>
<dbReference type="InterPro" id="IPR035921">
    <property type="entry name" value="F/V-ATP_Csub_sf"/>
</dbReference>
<dbReference type="NCBIfam" id="TIGR01100">
    <property type="entry name" value="V_ATP_synt_C"/>
    <property type="match status" value="1"/>
</dbReference>
<dbReference type="PANTHER" id="PTHR10263">
    <property type="entry name" value="V-TYPE PROTON ATPASE PROTEOLIPID SUBUNIT"/>
    <property type="match status" value="1"/>
</dbReference>
<dbReference type="Pfam" id="PF00137">
    <property type="entry name" value="ATP-synt_C"/>
    <property type="match status" value="2"/>
</dbReference>
<dbReference type="PRINTS" id="PR00122">
    <property type="entry name" value="VACATPASE"/>
</dbReference>
<dbReference type="SUPFAM" id="SSF81333">
    <property type="entry name" value="F1F0 ATP synthase subunit C"/>
    <property type="match status" value="2"/>
</dbReference>
<comment type="function">
    <text>Proton-conducting pore forming subunit of the membrane integral V0 complex of vacuolar ATPase. V-ATPase is responsible for acidifying a variety of intracellular compartments in eukaryotic cells.</text>
</comment>
<comment type="subunit">
    <text>V-ATPase is a heteromultimeric enzyme composed of a peripheral catalytic V1 complex (main components: subunits A, B, C, D, E, and F) attached to an integral membrane V0 proton pore complex (main component: the proteolipid protein; which is present as a hexamer that forms the proton-conducting pore).</text>
</comment>
<comment type="subcellular location">
    <subcellularLocation>
        <location>Vacuole membrane</location>
        <topology>Multi-pass membrane protein</topology>
    </subcellularLocation>
    <text>Tonoplast.</text>
</comment>
<comment type="developmental stage">
    <text>Increases dramatically in tissues undergoing rapid expansion, particularly in anthers, ovules, and petals.</text>
</comment>
<comment type="similarity">
    <text evidence="3">Belongs to the V-ATPase proteolipid subunit family.</text>
</comment>
<sequence length="165" mass="16659">MSSTFSGDETAPFFGFLGAAAALVFSCMGAAYGTAKSGVGVASMGVMRPELVMKSIVPVVMAGVLGIYGLIIAVIISTGINPKAKSYYLFDGYAHLSSGLACGLAGLSAGMAIGIVGDAGVRANAQQPKLFVGMILILIFAEALALYGLIVGIILSSRAGQSRAE</sequence>
<keyword id="KW-0375">Hydrogen ion transport</keyword>
<keyword id="KW-0406">Ion transport</keyword>
<keyword id="KW-0472">Membrane</keyword>
<keyword id="KW-1185">Reference proteome</keyword>
<keyword id="KW-0812">Transmembrane</keyword>
<keyword id="KW-1133">Transmembrane helix</keyword>
<keyword id="KW-0813">Transport</keyword>
<keyword id="KW-0926">Vacuole</keyword>
<feature type="chain" id="PRO_0000071768" description="V-type proton ATPase 16 kDa proteolipid subunit">
    <location>
        <begin position="1"/>
        <end position="165"/>
    </location>
</feature>
<feature type="topological domain" description="Lumenal" evidence="2">
    <location>
        <begin position="1"/>
        <end position="10"/>
    </location>
</feature>
<feature type="transmembrane region" description="Helical" evidence="2">
    <location>
        <begin position="11"/>
        <end position="33"/>
    </location>
</feature>
<feature type="topological domain" description="Cytoplasmic" evidence="2">
    <location>
        <begin position="34"/>
        <end position="55"/>
    </location>
</feature>
<feature type="transmembrane region" description="Helical" evidence="2">
    <location>
        <begin position="56"/>
        <end position="76"/>
    </location>
</feature>
<feature type="topological domain" description="Lumenal" evidence="2">
    <location>
        <begin position="77"/>
        <end position="95"/>
    </location>
</feature>
<feature type="transmembrane region" description="Helical" evidence="2">
    <location>
        <begin position="96"/>
        <end position="117"/>
    </location>
</feature>
<feature type="topological domain" description="Cytoplasmic" evidence="2">
    <location>
        <begin position="118"/>
        <end position="129"/>
    </location>
</feature>
<feature type="transmembrane region" description="Helical" evidence="2">
    <location>
        <begin position="130"/>
        <end position="155"/>
    </location>
</feature>
<feature type="topological domain" description="Lumenal" evidence="2">
    <location>
        <begin position="156"/>
        <end position="165"/>
    </location>
</feature>
<feature type="site" description="Essential for proton translocation" evidence="1">
    <location>
        <position position="142"/>
    </location>
</feature>
<feature type="sequence variant" description="In CVA16-4.">
    <original>S</original>
    <variation>T</variation>
    <location>
        <position position="3"/>
    </location>
</feature>
<reference key="1">
    <citation type="journal article" date="1995" name="Plant Physiol.">
        <title>Expression of two related vacuolar H(+)-ATPase 16-kilodalton proteolipid genes is differentially regulated in a tissue-specific manner.</title>
        <authorList>
            <person name="Hasenfratz M.P."/>
            <person name="Tsou C.L."/>
            <person name="Wilkins T.A."/>
        </authorList>
    </citation>
    <scope>NUCLEOTIDE SEQUENCE [MRNA]</scope>
    <source>
        <strain>cv. Acala SJ2</strain>
        <tissue>Ovule</tissue>
    </source>
</reference>